<name>TIM21_GIBZE</name>
<evidence type="ECO:0000250" key="1"/>
<evidence type="ECO:0000255" key="2"/>
<evidence type="ECO:0000305" key="3"/>
<protein>
    <recommendedName>
        <fullName>Mitochondrial import inner membrane translocase subunit TIM21</fullName>
    </recommendedName>
</protein>
<organism>
    <name type="scientific">Gibberella zeae (strain ATCC MYA-4620 / CBS 123657 / FGSC 9075 / NRRL 31084 / PH-1)</name>
    <name type="common">Wheat head blight fungus</name>
    <name type="synonym">Fusarium graminearum</name>
    <dbReference type="NCBI Taxonomy" id="229533"/>
    <lineage>
        <taxon>Eukaryota</taxon>
        <taxon>Fungi</taxon>
        <taxon>Dikarya</taxon>
        <taxon>Ascomycota</taxon>
        <taxon>Pezizomycotina</taxon>
        <taxon>Sordariomycetes</taxon>
        <taxon>Hypocreomycetidae</taxon>
        <taxon>Hypocreales</taxon>
        <taxon>Nectriaceae</taxon>
        <taxon>Fusarium</taxon>
    </lineage>
</organism>
<proteinExistence type="inferred from homology"/>
<dbReference type="EMBL" id="DS231668">
    <property type="protein sequence ID" value="ESU16328.1"/>
    <property type="molecule type" value="Genomic_DNA"/>
</dbReference>
<dbReference type="EMBL" id="HG970335">
    <property type="protein sequence ID" value="CEF85715.1"/>
    <property type="molecule type" value="Genomic_DNA"/>
</dbReference>
<dbReference type="RefSeq" id="XP_011327988.1">
    <property type="nucleotide sequence ID" value="XM_011329686.1"/>
</dbReference>
<dbReference type="SMR" id="Q4HZ95"/>
<dbReference type="FunCoup" id="Q4HZ95">
    <property type="interactions" value="245"/>
</dbReference>
<dbReference type="STRING" id="229533.Q4HZ95"/>
<dbReference type="GeneID" id="23556650"/>
<dbReference type="KEGG" id="fgr:FGSG_09713"/>
<dbReference type="VEuPathDB" id="FungiDB:FGRAMPH1_01G26449"/>
<dbReference type="eggNOG" id="KOG4836">
    <property type="taxonomic scope" value="Eukaryota"/>
</dbReference>
<dbReference type="HOGENOM" id="CLU_089407_0_0_1"/>
<dbReference type="InParanoid" id="Q4HZ95"/>
<dbReference type="OrthoDB" id="35203at110618"/>
<dbReference type="Proteomes" id="UP000070720">
    <property type="component" value="Chromosome 4"/>
</dbReference>
<dbReference type="GO" id="GO:0005744">
    <property type="term" value="C:TIM23 mitochondrial import inner membrane translocase complex"/>
    <property type="evidence" value="ECO:0007669"/>
    <property type="project" value="InterPro"/>
</dbReference>
<dbReference type="GO" id="GO:0030150">
    <property type="term" value="P:protein import into mitochondrial matrix"/>
    <property type="evidence" value="ECO:0007669"/>
    <property type="project" value="InterPro"/>
</dbReference>
<dbReference type="FunFam" id="3.10.450.320:FF:000002">
    <property type="entry name" value="Mitochondrial import inner membrane translocase subunit tim21"/>
    <property type="match status" value="1"/>
</dbReference>
<dbReference type="Gene3D" id="3.10.450.320">
    <property type="entry name" value="Mitochondrial import inner membrane translocase subunit Tim21"/>
    <property type="match status" value="1"/>
</dbReference>
<dbReference type="InterPro" id="IPR013261">
    <property type="entry name" value="Tim21"/>
</dbReference>
<dbReference type="InterPro" id="IPR038552">
    <property type="entry name" value="Tim21_IMS_sf"/>
</dbReference>
<dbReference type="PANTHER" id="PTHR13032">
    <property type="entry name" value="MITOCHONDRIAL IMPORT INNER MEMBRANE TRANSLOCASE SUBUNIT TIM21"/>
    <property type="match status" value="1"/>
</dbReference>
<dbReference type="PANTHER" id="PTHR13032:SF6">
    <property type="entry name" value="MITOCHONDRIAL IMPORT INNER MEMBRANE TRANSLOCASE SUBUNIT TIM21"/>
    <property type="match status" value="1"/>
</dbReference>
<dbReference type="Pfam" id="PF08294">
    <property type="entry name" value="TIM21"/>
    <property type="match status" value="1"/>
</dbReference>
<gene>
    <name type="primary">TIM21</name>
    <name type="ORF">FGRRES_09713</name>
    <name type="ORF">FGSG_09713</name>
</gene>
<comment type="function">
    <text evidence="1">Essential component of the TIM23 complex, a complex that mediates the translocation of transit peptide-containing proteins across the mitochondrial inner membrane. Required to keep the TOM and the TIM23 complexes in close contact. At some point, it is released from the TOM23 complex to allow protein translocation into the mitochondrial matrix (By similarity).</text>
</comment>
<comment type="subunit">
    <text evidence="1">Component of the TIM23 complex, at least composed of TIM23, TIM17, TIM50 and TIM21.</text>
</comment>
<comment type="subcellular location">
    <subcellularLocation>
        <location evidence="1">Mitochondrion inner membrane</location>
        <topology evidence="1">Single-pass membrane protein</topology>
    </subcellularLocation>
</comment>
<comment type="similarity">
    <text evidence="3">Belongs to the TIM21 family.</text>
</comment>
<keyword id="KW-0472">Membrane</keyword>
<keyword id="KW-0496">Mitochondrion</keyword>
<keyword id="KW-0999">Mitochondrion inner membrane</keyword>
<keyword id="KW-0653">Protein transport</keyword>
<keyword id="KW-1185">Reference proteome</keyword>
<keyword id="KW-0809">Transit peptide</keyword>
<keyword id="KW-0811">Translocation</keyword>
<keyword id="KW-0812">Transmembrane</keyword>
<keyword id="KW-1133">Transmembrane helix</keyword>
<keyword id="KW-0813">Transport</keyword>
<reference key="1">
    <citation type="journal article" date="2007" name="Science">
        <title>The Fusarium graminearum genome reveals a link between localized polymorphism and pathogen specialization.</title>
        <authorList>
            <person name="Cuomo C.A."/>
            <person name="Gueldener U."/>
            <person name="Xu J.-R."/>
            <person name="Trail F."/>
            <person name="Turgeon B.G."/>
            <person name="Di Pietro A."/>
            <person name="Walton J.D."/>
            <person name="Ma L.-J."/>
            <person name="Baker S.E."/>
            <person name="Rep M."/>
            <person name="Adam G."/>
            <person name="Antoniw J."/>
            <person name="Baldwin T."/>
            <person name="Calvo S.E."/>
            <person name="Chang Y.-L."/>
            <person name="DeCaprio D."/>
            <person name="Gale L.R."/>
            <person name="Gnerre S."/>
            <person name="Goswami R.S."/>
            <person name="Hammond-Kosack K."/>
            <person name="Harris L.J."/>
            <person name="Hilburn K."/>
            <person name="Kennell J.C."/>
            <person name="Kroken S."/>
            <person name="Magnuson J.K."/>
            <person name="Mannhaupt G."/>
            <person name="Mauceli E.W."/>
            <person name="Mewes H.-W."/>
            <person name="Mitterbauer R."/>
            <person name="Muehlbauer G."/>
            <person name="Muensterkoetter M."/>
            <person name="Nelson D."/>
            <person name="O'Donnell K."/>
            <person name="Ouellet T."/>
            <person name="Qi W."/>
            <person name="Quesneville H."/>
            <person name="Roncero M.I.G."/>
            <person name="Seong K.-Y."/>
            <person name="Tetko I.V."/>
            <person name="Urban M."/>
            <person name="Waalwijk C."/>
            <person name="Ward T.J."/>
            <person name="Yao J."/>
            <person name="Birren B.W."/>
            <person name="Kistler H.C."/>
        </authorList>
    </citation>
    <scope>NUCLEOTIDE SEQUENCE [LARGE SCALE GENOMIC DNA]</scope>
    <source>
        <strain>ATCC MYA-4620 / CBS 123657 / FGSC 9075 / NRRL 31084 / PH-1</strain>
    </source>
</reference>
<reference key="2">
    <citation type="journal article" date="2010" name="Nature">
        <title>Comparative genomics reveals mobile pathogenicity chromosomes in Fusarium.</title>
        <authorList>
            <person name="Ma L.-J."/>
            <person name="van der Does H.C."/>
            <person name="Borkovich K.A."/>
            <person name="Coleman J.J."/>
            <person name="Daboussi M.-J."/>
            <person name="Di Pietro A."/>
            <person name="Dufresne M."/>
            <person name="Freitag M."/>
            <person name="Grabherr M."/>
            <person name="Henrissat B."/>
            <person name="Houterman P.M."/>
            <person name="Kang S."/>
            <person name="Shim W.-B."/>
            <person name="Woloshuk C."/>
            <person name="Xie X."/>
            <person name="Xu J.-R."/>
            <person name="Antoniw J."/>
            <person name="Baker S.E."/>
            <person name="Bluhm B.H."/>
            <person name="Breakspear A."/>
            <person name="Brown D.W."/>
            <person name="Butchko R.A.E."/>
            <person name="Chapman S."/>
            <person name="Coulson R."/>
            <person name="Coutinho P.M."/>
            <person name="Danchin E.G.J."/>
            <person name="Diener A."/>
            <person name="Gale L.R."/>
            <person name="Gardiner D.M."/>
            <person name="Goff S."/>
            <person name="Hammond-Kosack K.E."/>
            <person name="Hilburn K."/>
            <person name="Hua-Van A."/>
            <person name="Jonkers W."/>
            <person name="Kazan K."/>
            <person name="Kodira C.D."/>
            <person name="Koehrsen M."/>
            <person name="Kumar L."/>
            <person name="Lee Y.-H."/>
            <person name="Li L."/>
            <person name="Manners J.M."/>
            <person name="Miranda-Saavedra D."/>
            <person name="Mukherjee M."/>
            <person name="Park G."/>
            <person name="Park J."/>
            <person name="Park S.-Y."/>
            <person name="Proctor R.H."/>
            <person name="Regev A."/>
            <person name="Ruiz-Roldan M.C."/>
            <person name="Sain D."/>
            <person name="Sakthikumar S."/>
            <person name="Sykes S."/>
            <person name="Schwartz D.C."/>
            <person name="Turgeon B.G."/>
            <person name="Wapinski I."/>
            <person name="Yoder O."/>
            <person name="Young S."/>
            <person name="Zeng Q."/>
            <person name="Zhou S."/>
            <person name="Galagan J."/>
            <person name="Cuomo C.A."/>
            <person name="Kistler H.C."/>
            <person name="Rep M."/>
        </authorList>
    </citation>
    <scope>GENOME REANNOTATION</scope>
    <source>
        <strain>ATCC MYA-4620 / CBS 123657 / FGSC 9075 / NRRL 31084 / PH-1</strain>
    </source>
</reference>
<reference key="3">
    <citation type="journal article" date="2015" name="BMC Genomics">
        <title>The completed genome sequence of the pathogenic ascomycete fungus Fusarium graminearum.</title>
        <authorList>
            <person name="King R."/>
            <person name="Urban M."/>
            <person name="Hammond-Kosack M.C.U."/>
            <person name="Hassani-Pak K."/>
            <person name="Hammond-Kosack K.E."/>
        </authorList>
    </citation>
    <scope>NUCLEOTIDE SEQUENCE [LARGE SCALE GENOMIC DNA]</scope>
    <source>
        <strain>ATCC MYA-4620 / CBS 123657 / FGSC 9075 / NRRL 31084 / PH-1</strain>
    </source>
</reference>
<feature type="transit peptide" description="Mitochondrion" evidence="2">
    <location>
        <begin position="1"/>
        <end position="31"/>
    </location>
</feature>
<feature type="chain" id="PRO_0000043145" description="Mitochondrial import inner membrane translocase subunit TIM21">
    <location>
        <begin position="32"/>
        <end position="229"/>
    </location>
</feature>
<feature type="topological domain" description="Mitochondrial matrix" evidence="2">
    <location>
        <begin position="32"/>
        <end position="76"/>
    </location>
</feature>
<feature type="transmembrane region" description="Helical" evidence="2">
    <location>
        <begin position="77"/>
        <end position="97"/>
    </location>
</feature>
<feature type="topological domain" description="Mitochondrial intermembrane" evidence="2">
    <location>
        <begin position="98"/>
        <end position="229"/>
    </location>
</feature>
<accession>Q4HZ95</accession>
<accession>A0A0E0SH02</accession>
<accession>V6RP31</accession>
<sequence length="229" mass="26006">MNPTTNLLVTRSTAFRGVPTTLRPFLASRYYATQQGLGATPRGPKRRAVTPFNDNGHVPWKQLSVAEKAARATQQSFNFGMILVGLMLTGGVGYFLWTDVFSPDSKISNFNRAVDKIRSDPRIIDVMGDSKKIAAHGDETFNKWRRARPVASSETTDARGDQHIMMHFYVEGPKNNGVARLHMIKYRGHSDFEYKYLFVDVKDHERIYLEHEDSSSKNGKKFSLFGVKW</sequence>